<accession>Q9DC26</accession>
<gene>
    <name type="primary">Slc46a3</name>
</gene>
<sequence>MKISFIEPAILLNAFAMTLTIPLTAQYVYRRIWEETGNYTFASNSNGSECDQNKSSSIFAFREEVQKKASLFNLQVEMSALIPGLVSTFMLLASSDNHGRKLPMVLSSLGSLGTNTWLCMMSYFDLPLQLLIASTFIGALFGNYTTFWGACFAYIVDQQKEYKHRIIRIAILDFMLGVVTGLTGLSSGYFIRELGFVWSYFITAMVLIVNLAYILFFLNDPIKESSSQIVTMSCIESLKDLFYRTYMLFKNGSSKRQALLCLLIFTLVIYFFVIIGISPIFTLYELGPPLCWNEVYIGYGSALGSVSFLSSFLGIWLFSYCLKDIHIAYIGIFTTMVGMTLAAFTRTTLMMFLVRIPFIFTIMPLSVLRSMLSKVVHSTEQGALFACIAFLETLAGVTSTSAYSGIYSATVAWYPGFIFLLSAGLLVLPAISLCCVKSIGWEEGSYTLLVHEEPSEHTSD</sequence>
<protein>
    <recommendedName>
        <fullName>Lysosomal proton-coupled steroid conjugate and bile acid symporter SLC46A3</fullName>
    </recommendedName>
    <alternativeName>
        <fullName>Solute carrier family 46 member 3</fullName>
    </alternativeName>
</protein>
<reference key="1">
    <citation type="journal article" date="2005" name="Science">
        <title>The transcriptional landscape of the mammalian genome.</title>
        <authorList>
            <person name="Carninci P."/>
            <person name="Kasukawa T."/>
            <person name="Katayama S."/>
            <person name="Gough J."/>
            <person name="Frith M.C."/>
            <person name="Maeda N."/>
            <person name="Oyama R."/>
            <person name="Ravasi T."/>
            <person name="Lenhard B."/>
            <person name="Wells C."/>
            <person name="Kodzius R."/>
            <person name="Shimokawa K."/>
            <person name="Bajic V.B."/>
            <person name="Brenner S.E."/>
            <person name="Batalov S."/>
            <person name="Forrest A.R."/>
            <person name="Zavolan M."/>
            <person name="Davis M.J."/>
            <person name="Wilming L.G."/>
            <person name="Aidinis V."/>
            <person name="Allen J.E."/>
            <person name="Ambesi-Impiombato A."/>
            <person name="Apweiler R."/>
            <person name="Aturaliya R.N."/>
            <person name="Bailey T.L."/>
            <person name="Bansal M."/>
            <person name="Baxter L."/>
            <person name="Beisel K.W."/>
            <person name="Bersano T."/>
            <person name="Bono H."/>
            <person name="Chalk A.M."/>
            <person name="Chiu K.P."/>
            <person name="Choudhary V."/>
            <person name="Christoffels A."/>
            <person name="Clutterbuck D.R."/>
            <person name="Crowe M.L."/>
            <person name="Dalla E."/>
            <person name="Dalrymple B.P."/>
            <person name="de Bono B."/>
            <person name="Della Gatta G."/>
            <person name="di Bernardo D."/>
            <person name="Down T."/>
            <person name="Engstrom P."/>
            <person name="Fagiolini M."/>
            <person name="Faulkner G."/>
            <person name="Fletcher C.F."/>
            <person name="Fukushima T."/>
            <person name="Furuno M."/>
            <person name="Futaki S."/>
            <person name="Gariboldi M."/>
            <person name="Georgii-Hemming P."/>
            <person name="Gingeras T.R."/>
            <person name="Gojobori T."/>
            <person name="Green R.E."/>
            <person name="Gustincich S."/>
            <person name="Harbers M."/>
            <person name="Hayashi Y."/>
            <person name="Hensch T.K."/>
            <person name="Hirokawa N."/>
            <person name="Hill D."/>
            <person name="Huminiecki L."/>
            <person name="Iacono M."/>
            <person name="Ikeo K."/>
            <person name="Iwama A."/>
            <person name="Ishikawa T."/>
            <person name="Jakt M."/>
            <person name="Kanapin A."/>
            <person name="Katoh M."/>
            <person name="Kawasawa Y."/>
            <person name="Kelso J."/>
            <person name="Kitamura H."/>
            <person name="Kitano H."/>
            <person name="Kollias G."/>
            <person name="Krishnan S.P."/>
            <person name="Kruger A."/>
            <person name="Kummerfeld S.K."/>
            <person name="Kurochkin I.V."/>
            <person name="Lareau L.F."/>
            <person name="Lazarevic D."/>
            <person name="Lipovich L."/>
            <person name="Liu J."/>
            <person name="Liuni S."/>
            <person name="McWilliam S."/>
            <person name="Madan Babu M."/>
            <person name="Madera M."/>
            <person name="Marchionni L."/>
            <person name="Matsuda H."/>
            <person name="Matsuzawa S."/>
            <person name="Miki H."/>
            <person name="Mignone F."/>
            <person name="Miyake S."/>
            <person name="Morris K."/>
            <person name="Mottagui-Tabar S."/>
            <person name="Mulder N."/>
            <person name="Nakano N."/>
            <person name="Nakauchi H."/>
            <person name="Ng P."/>
            <person name="Nilsson R."/>
            <person name="Nishiguchi S."/>
            <person name="Nishikawa S."/>
            <person name="Nori F."/>
            <person name="Ohara O."/>
            <person name="Okazaki Y."/>
            <person name="Orlando V."/>
            <person name="Pang K.C."/>
            <person name="Pavan W.J."/>
            <person name="Pavesi G."/>
            <person name="Pesole G."/>
            <person name="Petrovsky N."/>
            <person name="Piazza S."/>
            <person name="Reed J."/>
            <person name="Reid J.F."/>
            <person name="Ring B.Z."/>
            <person name="Ringwald M."/>
            <person name="Rost B."/>
            <person name="Ruan Y."/>
            <person name="Salzberg S.L."/>
            <person name="Sandelin A."/>
            <person name="Schneider C."/>
            <person name="Schoenbach C."/>
            <person name="Sekiguchi K."/>
            <person name="Semple C.A."/>
            <person name="Seno S."/>
            <person name="Sessa L."/>
            <person name="Sheng Y."/>
            <person name="Shibata Y."/>
            <person name="Shimada H."/>
            <person name="Shimada K."/>
            <person name="Silva D."/>
            <person name="Sinclair B."/>
            <person name="Sperling S."/>
            <person name="Stupka E."/>
            <person name="Sugiura K."/>
            <person name="Sultana R."/>
            <person name="Takenaka Y."/>
            <person name="Taki K."/>
            <person name="Tammoja K."/>
            <person name="Tan S.L."/>
            <person name="Tang S."/>
            <person name="Taylor M.S."/>
            <person name="Tegner J."/>
            <person name="Teichmann S.A."/>
            <person name="Ueda H.R."/>
            <person name="van Nimwegen E."/>
            <person name="Verardo R."/>
            <person name="Wei C.L."/>
            <person name="Yagi K."/>
            <person name="Yamanishi H."/>
            <person name="Zabarovsky E."/>
            <person name="Zhu S."/>
            <person name="Zimmer A."/>
            <person name="Hide W."/>
            <person name="Bult C."/>
            <person name="Grimmond S.M."/>
            <person name="Teasdale R.D."/>
            <person name="Liu E.T."/>
            <person name="Brusic V."/>
            <person name="Quackenbush J."/>
            <person name="Wahlestedt C."/>
            <person name="Mattick J.S."/>
            <person name="Hume D.A."/>
            <person name="Kai C."/>
            <person name="Sasaki D."/>
            <person name="Tomaru Y."/>
            <person name="Fukuda S."/>
            <person name="Kanamori-Katayama M."/>
            <person name="Suzuki M."/>
            <person name="Aoki J."/>
            <person name="Arakawa T."/>
            <person name="Iida J."/>
            <person name="Imamura K."/>
            <person name="Itoh M."/>
            <person name="Kato T."/>
            <person name="Kawaji H."/>
            <person name="Kawagashira N."/>
            <person name="Kawashima T."/>
            <person name="Kojima M."/>
            <person name="Kondo S."/>
            <person name="Konno H."/>
            <person name="Nakano K."/>
            <person name="Ninomiya N."/>
            <person name="Nishio T."/>
            <person name="Okada M."/>
            <person name="Plessy C."/>
            <person name="Shibata K."/>
            <person name="Shiraki T."/>
            <person name="Suzuki S."/>
            <person name="Tagami M."/>
            <person name="Waki K."/>
            <person name="Watahiki A."/>
            <person name="Okamura-Oho Y."/>
            <person name="Suzuki H."/>
            <person name="Kawai J."/>
            <person name="Hayashizaki Y."/>
        </authorList>
    </citation>
    <scope>NUCLEOTIDE SEQUENCE [LARGE SCALE MRNA]</scope>
    <source>
        <strain>C57BL/6J</strain>
        <strain>NOD</strain>
        <tissue>Lung</tissue>
        <tissue>Spleen</tissue>
    </source>
</reference>
<reference key="2">
    <citation type="journal article" date="2004" name="Genome Res.">
        <title>The status, quality, and expansion of the NIH full-length cDNA project: the Mammalian Gene Collection (MGC).</title>
        <authorList>
            <consortium name="The MGC Project Team"/>
        </authorList>
    </citation>
    <scope>NUCLEOTIDE SEQUENCE [LARGE SCALE MRNA]</scope>
    <source>
        <strain>FVB/N</strain>
        <tissue>Mammary tumor</tissue>
    </source>
</reference>
<reference key="3">
    <citation type="journal article" date="2017" name="J. Immunol.">
        <title>SLC46 Family Transporters Facilitate Cytosolic Innate Immune Recognition of Monomeric Peptidoglycans.</title>
        <authorList>
            <person name="Paik D."/>
            <person name="Monahan A."/>
            <person name="Caffrey D.R."/>
            <person name="Elling R."/>
            <person name="Goldman W.E."/>
            <person name="Silverman N."/>
        </authorList>
    </citation>
    <scope>FUNCTION</scope>
    <scope>TRANSPORTER ACTIVITY</scope>
</reference>
<reference key="4">
    <citation type="journal article" date="2021" name="ACS Cent. Sci.">
        <title>Human SLC46A2 Is the Dominant cGAMP Importer in Extracellular cGAMP-Sensing Macrophages and Monocytes.</title>
        <authorList>
            <person name="Cordova A.F."/>
            <person name="Ritchie C."/>
            <person name="Boehnert V."/>
            <person name="Li L."/>
        </authorList>
    </citation>
    <scope>FUNCTION</scope>
    <scope>TRANSPORTER ACTIVITY</scope>
</reference>
<reference key="5">
    <citation type="journal article" date="2021" name="Nat. Commun.">
        <title>Lysosomal SLC46A3 modulates hepatic cytosolic copper homeostasis.</title>
        <authorList>
            <person name="Kim J.H."/>
            <person name="Matsubara T."/>
            <person name="Lee J."/>
            <person name="Fenollar-Ferrer C."/>
            <person name="Han K."/>
            <person name="Kim D."/>
            <person name="Jia S."/>
            <person name="Chang C.J."/>
            <person name="Yang H."/>
            <person name="Nagano T."/>
            <person name="Krausz K.W."/>
            <person name="Yim S.H."/>
            <person name="Gonzalez F.J."/>
        </authorList>
    </citation>
    <scope>FUNCTION</scope>
    <scope>DISRUPTION PHENOTYPE</scope>
    <scope>TISSUE SPECIFICITY</scope>
    <scope>SUBCELLULAR LOCATION</scope>
    <scope>INDUCTION BY TCDD</scope>
    <scope>DEVELOPMENTAL STAGE</scope>
</reference>
<reference key="6">
    <citation type="journal article" date="2023" name="Immunity">
        <title>Methotrexate suppresses psoriatic skin inflammation by inhibiting muropeptide transporter SLC46A2 activity.</title>
        <authorList>
            <person name="Bharadwaj R."/>
            <person name="Lusi C.F."/>
            <person name="Mashayekh S."/>
            <person name="Nagar A."/>
            <person name="Subbarao M."/>
            <person name="Kane G.I."/>
            <person name="Wodzanowski K.A."/>
            <person name="Brown A.R."/>
            <person name="Okuda K."/>
            <person name="Monahan A."/>
            <person name="Paik D."/>
            <person name="Nandy A."/>
            <person name="Anonick M.V."/>
            <person name="Goldman W.E."/>
            <person name="Kanneganti T.D."/>
            <person name="Orzalli M.H."/>
            <person name="Grimes C.L."/>
            <person name="Atukorale P.U."/>
            <person name="Silverman N."/>
        </authorList>
    </citation>
    <scope>FUNCTION</scope>
    <scope>TRANSPORTER ACTIVITY</scope>
</reference>
<feature type="signal peptide" evidence="2">
    <location>
        <begin position="1"/>
        <end position="25"/>
    </location>
</feature>
<feature type="chain" id="PRO_0000307254" description="Lysosomal proton-coupled steroid conjugate and bile acid symporter SLC46A3">
    <location>
        <begin position="26"/>
        <end position="460"/>
    </location>
</feature>
<feature type="topological domain" description="Extracellular" evidence="2">
    <location>
        <begin position="26"/>
        <end position="73"/>
    </location>
</feature>
<feature type="transmembrane region" description="Helical" evidence="2">
    <location>
        <begin position="74"/>
        <end position="94"/>
    </location>
</feature>
<feature type="topological domain" description="Cytoplasmic" evidence="2">
    <location>
        <begin position="95"/>
        <end position="111"/>
    </location>
</feature>
<feature type="transmembrane region" description="Helical" evidence="2">
    <location>
        <begin position="112"/>
        <end position="132"/>
    </location>
</feature>
<feature type="topological domain" description="Extracellular" evidence="2">
    <location>
        <begin position="133"/>
        <end position="135"/>
    </location>
</feature>
<feature type="transmembrane region" description="Helical" evidence="2">
    <location>
        <begin position="136"/>
        <end position="156"/>
    </location>
</feature>
<feature type="topological domain" description="Cytoplasmic" evidence="2">
    <location>
        <begin position="157"/>
        <end position="170"/>
    </location>
</feature>
<feature type="transmembrane region" description="Helical" evidence="2">
    <location>
        <begin position="171"/>
        <end position="191"/>
    </location>
</feature>
<feature type="topological domain" description="Extracellular" evidence="2">
    <location>
        <begin position="192"/>
        <end position="195"/>
    </location>
</feature>
<feature type="transmembrane region" description="Helical" evidence="2">
    <location>
        <begin position="196"/>
        <end position="216"/>
    </location>
</feature>
<feature type="topological domain" description="Cytoplasmic" evidence="2">
    <location>
        <begin position="217"/>
        <end position="257"/>
    </location>
</feature>
<feature type="transmembrane region" description="Helical" evidence="2">
    <location>
        <begin position="258"/>
        <end position="278"/>
    </location>
</feature>
<feature type="topological domain" description="Extracellular" evidence="2">
    <location>
        <begin position="279"/>
        <end position="301"/>
    </location>
</feature>
<feature type="transmembrane region" description="Helical" evidence="2">
    <location>
        <begin position="302"/>
        <end position="322"/>
    </location>
</feature>
<feature type="topological domain" description="Cytoplasmic" evidence="2">
    <location>
        <begin position="323"/>
        <end position="324"/>
    </location>
</feature>
<feature type="transmembrane region" description="Helical" evidence="2">
    <location>
        <begin position="325"/>
        <end position="345"/>
    </location>
</feature>
<feature type="topological domain" description="Extracellular" evidence="2">
    <location>
        <begin position="346"/>
        <end position="347"/>
    </location>
</feature>
<feature type="transmembrane region" description="Helical" evidence="2">
    <location>
        <begin position="348"/>
        <end position="368"/>
    </location>
</feature>
<feature type="topological domain" description="Cytoplasmic" evidence="2">
    <location>
        <begin position="369"/>
        <end position="381"/>
    </location>
</feature>
<feature type="transmembrane region" description="Helical" evidence="2">
    <location>
        <begin position="382"/>
        <end position="402"/>
    </location>
</feature>
<feature type="topological domain" description="Extracellular" evidence="2">
    <location>
        <begin position="403"/>
        <end position="410"/>
    </location>
</feature>
<feature type="transmembrane region" description="Helical" evidence="2">
    <location>
        <begin position="411"/>
        <end position="431"/>
    </location>
</feature>
<feature type="topological domain" description="Cytoplasmic" evidence="2">
    <location>
        <begin position="432"/>
        <end position="460"/>
    </location>
</feature>
<feature type="short sequence motif" description="Tyrosine-based lysosomal-sorting motif" evidence="1">
    <location>
        <begin position="446"/>
        <end position="449"/>
    </location>
</feature>
<feature type="glycosylation site" description="N-linked (GlcNAc...) asparagine" evidence="2">
    <location>
        <position position="38"/>
    </location>
</feature>
<feature type="glycosylation site" description="N-linked (GlcNAc...) asparagine" evidence="2">
    <location>
        <position position="46"/>
    </location>
</feature>
<feature type="glycosylation site" description="N-linked (GlcNAc...) asparagine" evidence="2">
    <location>
        <position position="53"/>
    </location>
</feature>
<keyword id="KW-0325">Glycoprotein</keyword>
<keyword id="KW-0458">Lysosome</keyword>
<keyword id="KW-0472">Membrane</keyword>
<keyword id="KW-1185">Reference proteome</keyword>
<keyword id="KW-0732">Signal</keyword>
<keyword id="KW-0769">Symport</keyword>
<keyword id="KW-0812">Transmembrane</keyword>
<keyword id="KW-1133">Transmembrane helix</keyword>
<keyword id="KW-0813">Transport</keyword>
<evidence type="ECO:0000250" key="1">
    <source>
        <dbReference type="UniProtKB" id="Q7Z3Q1"/>
    </source>
</evidence>
<evidence type="ECO:0000255" key="2"/>
<evidence type="ECO:0000269" key="3">
    <source>
    </source>
</evidence>
<evidence type="ECO:0000269" key="4">
    <source>
    </source>
</evidence>
<evidence type="ECO:0000269" key="5">
    <source>
    </source>
</evidence>
<evidence type="ECO:0000269" key="6">
    <source>
    </source>
</evidence>
<evidence type="ECO:0000305" key="7"/>
<evidence type="ECO:0000305" key="8">
    <source>
    </source>
</evidence>
<evidence type="ECO:0000305" key="9">
    <source>
    </source>
</evidence>
<evidence type="ECO:0000305" key="10">
    <source>
    </source>
</evidence>
<name>S46A3_MOUSE</name>
<organism>
    <name type="scientific">Mus musculus</name>
    <name type="common">Mouse</name>
    <dbReference type="NCBI Taxonomy" id="10090"/>
    <lineage>
        <taxon>Eukaryota</taxon>
        <taxon>Metazoa</taxon>
        <taxon>Chordata</taxon>
        <taxon>Craniata</taxon>
        <taxon>Vertebrata</taxon>
        <taxon>Euteleostomi</taxon>
        <taxon>Mammalia</taxon>
        <taxon>Eutheria</taxon>
        <taxon>Euarchontoglires</taxon>
        <taxon>Glires</taxon>
        <taxon>Rodentia</taxon>
        <taxon>Myomorpha</taxon>
        <taxon>Muroidea</taxon>
        <taxon>Muridae</taxon>
        <taxon>Murinae</taxon>
        <taxon>Mus</taxon>
        <taxon>Mus</taxon>
    </lineage>
</organism>
<dbReference type="EMBL" id="AK004609">
    <property type="protein sequence ID" value="BAB23407.1"/>
    <property type="molecule type" value="mRNA"/>
</dbReference>
<dbReference type="EMBL" id="AK156898">
    <property type="protein sequence ID" value="BAE33889.1"/>
    <property type="molecule type" value="mRNA"/>
</dbReference>
<dbReference type="EMBL" id="BC006902">
    <property type="protein sequence ID" value="AAH06902.1"/>
    <property type="molecule type" value="mRNA"/>
</dbReference>
<dbReference type="CCDS" id="CCDS19880.1"/>
<dbReference type="RefSeq" id="NP_001343931.1">
    <property type="nucleotide sequence ID" value="NM_001357002.1"/>
</dbReference>
<dbReference type="RefSeq" id="NP_082148.1">
    <property type="nucleotide sequence ID" value="NM_027872.4"/>
</dbReference>
<dbReference type="RefSeq" id="XP_006504928.1">
    <property type="nucleotide sequence ID" value="XM_006504865.4"/>
</dbReference>
<dbReference type="RefSeq" id="XP_006504929.1">
    <property type="nucleotide sequence ID" value="XM_006504866.3"/>
</dbReference>
<dbReference type="RefSeq" id="XP_006504930.1">
    <property type="nucleotide sequence ID" value="XM_006504867.5"/>
</dbReference>
<dbReference type="SMR" id="Q9DC26"/>
<dbReference type="FunCoup" id="Q9DC26">
    <property type="interactions" value="97"/>
</dbReference>
<dbReference type="IntAct" id="Q9DC26">
    <property type="interactions" value="1"/>
</dbReference>
<dbReference type="STRING" id="10090.ENSMUSP00000031655"/>
<dbReference type="GlyCosmos" id="Q9DC26">
    <property type="glycosylation" value="3 sites, No reported glycans"/>
</dbReference>
<dbReference type="GlyGen" id="Q9DC26">
    <property type="glycosylation" value="3 sites"/>
</dbReference>
<dbReference type="PhosphoSitePlus" id="Q9DC26"/>
<dbReference type="PaxDb" id="10090-ENSMUSP00000031655"/>
<dbReference type="ProteomicsDB" id="260793"/>
<dbReference type="Antibodypedia" id="7527">
    <property type="antibodies" value="57 antibodies from 16 providers"/>
</dbReference>
<dbReference type="DNASU" id="71706"/>
<dbReference type="Ensembl" id="ENSMUST00000031655.4">
    <property type="protein sequence ID" value="ENSMUSP00000031655.4"/>
    <property type="gene ID" value="ENSMUSG00000029650.11"/>
</dbReference>
<dbReference type="Ensembl" id="ENSMUST00000118527.8">
    <property type="protein sequence ID" value="ENSMUSP00000113879.2"/>
    <property type="gene ID" value="ENSMUSG00000029650.11"/>
</dbReference>
<dbReference type="GeneID" id="71706"/>
<dbReference type="KEGG" id="mmu:71706"/>
<dbReference type="UCSC" id="uc009aol.1">
    <property type="organism name" value="mouse"/>
</dbReference>
<dbReference type="AGR" id="MGI:1918956"/>
<dbReference type="CTD" id="283537"/>
<dbReference type="MGI" id="MGI:1918956">
    <property type="gene designation" value="Slc46a3"/>
</dbReference>
<dbReference type="VEuPathDB" id="HostDB:ENSMUSG00000029650"/>
<dbReference type="eggNOG" id="KOG2816">
    <property type="taxonomic scope" value="Eukaryota"/>
</dbReference>
<dbReference type="GeneTree" id="ENSGT00950000183096"/>
<dbReference type="HOGENOM" id="CLU_028365_1_1_1"/>
<dbReference type="InParanoid" id="Q9DC26"/>
<dbReference type="OMA" id="DNTSRCA"/>
<dbReference type="OrthoDB" id="3026777at2759"/>
<dbReference type="PhylomeDB" id="Q9DC26"/>
<dbReference type="TreeFam" id="TF315701"/>
<dbReference type="BioGRID-ORCS" id="71706">
    <property type="hits" value="1 hit in 77 CRISPR screens"/>
</dbReference>
<dbReference type="ChiTaRS" id="Slc46a3">
    <property type="organism name" value="mouse"/>
</dbReference>
<dbReference type="PRO" id="PR:Q9DC26"/>
<dbReference type="Proteomes" id="UP000000589">
    <property type="component" value="Chromosome 5"/>
</dbReference>
<dbReference type="RNAct" id="Q9DC26">
    <property type="molecule type" value="protein"/>
</dbReference>
<dbReference type="Bgee" id="ENSMUSG00000029650">
    <property type="expression patterns" value="Expressed in epithelium of small intestine and 166 other cell types or tissues"/>
</dbReference>
<dbReference type="ExpressionAtlas" id="Q9DC26">
    <property type="expression patterns" value="baseline and differential"/>
</dbReference>
<dbReference type="GO" id="GO:0005765">
    <property type="term" value="C:lysosomal membrane"/>
    <property type="evidence" value="ECO:0000314"/>
    <property type="project" value="UniProt"/>
</dbReference>
<dbReference type="GO" id="GO:0005375">
    <property type="term" value="F:copper ion transmembrane transporter activity"/>
    <property type="evidence" value="ECO:0000314"/>
    <property type="project" value="UniProt"/>
</dbReference>
<dbReference type="GO" id="GO:0015293">
    <property type="term" value="F:symporter activity"/>
    <property type="evidence" value="ECO:0007669"/>
    <property type="project" value="UniProtKB-KW"/>
</dbReference>
<dbReference type="GO" id="GO:1904613">
    <property type="term" value="P:cellular response to 2,3,7,8-tetrachlorodibenzodioxine"/>
    <property type="evidence" value="ECO:0000314"/>
    <property type="project" value="UniProt"/>
</dbReference>
<dbReference type="GO" id="GO:0034486">
    <property type="term" value="P:vacuolar transmembrane transport"/>
    <property type="evidence" value="ECO:0007669"/>
    <property type="project" value="Ensembl"/>
</dbReference>
<dbReference type="Gene3D" id="1.20.1250.20">
    <property type="entry name" value="MFS general substrate transporter like domains"/>
    <property type="match status" value="1"/>
</dbReference>
<dbReference type="InterPro" id="IPR011701">
    <property type="entry name" value="MFS"/>
</dbReference>
<dbReference type="InterPro" id="IPR036259">
    <property type="entry name" value="MFS_trans_sf"/>
</dbReference>
<dbReference type="PANTHER" id="PTHR23507:SF9">
    <property type="entry name" value="LYSOSOMAL PROTON-COUPLED STEROID CONJUGATE AND BILE ACID SYMPORTER SLC46A3"/>
    <property type="match status" value="1"/>
</dbReference>
<dbReference type="PANTHER" id="PTHR23507">
    <property type="entry name" value="ZGC:174356"/>
    <property type="match status" value="1"/>
</dbReference>
<dbReference type="Pfam" id="PF07690">
    <property type="entry name" value="MFS_1"/>
    <property type="match status" value="1"/>
</dbReference>
<dbReference type="SUPFAM" id="SSF103473">
    <property type="entry name" value="MFS general substrate transporter"/>
    <property type="match status" value="1"/>
</dbReference>
<comment type="function">
    <text evidence="1 3 4 5 6 7">Lysosomal proton-coupled steroid conjugate and bile acid transporter. Preferentially recognizes lipophilic steroid conjugates or bile acis as endogenous substrates and seems to mediate escape from lysosomes to the cytoplasm (By similarity). Modulates hepatic cytosolic copper homeostasis, maybe acting as a lysosomal copper transporter and sequestering copper ions in the lysosome (PubMed:33436590). Delivers pathogen-associated molecular patterns to cytosolic pattern recognition receptors as part of the innate immune response to microbes. Selectively transports bacterial muramyl dipeptide (MDP) into the cytosol for recognition by NOD2, triggering inflammatory responses (PubMed:28539433, PubMed:37116499). Likely acts as a redundant importer of cyclic GMP-AMP dinucleotides (cGAMPs) in monocyte and macrophage cell lineages (PubMed:34235268). The transport mechanism, its electrogenicity and stoichiometry remain to be elucidated (Probable).</text>
</comment>
<comment type="catalytic activity">
    <reaction evidence="1">
        <text>estrone 3-sulfate(out) + n H(+)(out) = estrone 3-sulfate(in) + n H(+)(in)</text>
        <dbReference type="Rhea" id="RHEA:75483"/>
        <dbReference type="ChEBI" id="CHEBI:15378"/>
        <dbReference type="ChEBI" id="CHEBI:60050"/>
    </reaction>
</comment>
<comment type="catalytic activity">
    <reaction evidence="1">
        <text>25-hydroxyvitamin D3 sulfate(out) + n H(+)(out) = 25-hydroxyvitamin D3 sulfate(in) + n H(+)(in)</text>
        <dbReference type="Rhea" id="RHEA:75491"/>
        <dbReference type="ChEBI" id="CHEBI:15378"/>
        <dbReference type="ChEBI" id="CHEBI:194336"/>
    </reaction>
</comment>
<comment type="catalytic activity">
    <reaction evidence="1">
        <text>cholate(out) + n H(+)(out) = cholate(in) + n H(+)(in)</text>
        <dbReference type="Rhea" id="RHEA:75499"/>
        <dbReference type="ChEBI" id="CHEBI:15378"/>
        <dbReference type="ChEBI" id="CHEBI:29747"/>
    </reaction>
</comment>
<comment type="catalytic activity">
    <reaction evidence="1">
        <text>glycocholate(out) + n H(+)(out) = glycocholate(in) + n H(+)(in)</text>
        <dbReference type="Rhea" id="RHEA:75503"/>
        <dbReference type="ChEBI" id="CHEBI:15378"/>
        <dbReference type="ChEBI" id="CHEBI:29746"/>
    </reaction>
</comment>
<comment type="catalytic activity">
    <reaction evidence="1">
        <text>taurocholate(out) + n H(+)(out) = taurocholate(in) + n H(+)(in)</text>
        <dbReference type="Rhea" id="RHEA:75507"/>
        <dbReference type="ChEBI" id="CHEBI:15378"/>
        <dbReference type="ChEBI" id="CHEBI:36257"/>
    </reaction>
</comment>
<comment type="catalytic activity">
    <reaction evidence="1">
        <text>dehydroepiandrosterone 3-sulfate(out) + n H(+)(out) = dehydroepiandrosterone 3-sulfate(in) + n H(+)(in)</text>
        <dbReference type="Rhea" id="RHEA:75487"/>
        <dbReference type="ChEBI" id="CHEBI:15378"/>
        <dbReference type="ChEBI" id="CHEBI:57905"/>
    </reaction>
</comment>
<comment type="catalytic activity">
    <reaction evidence="3 6">
        <text>N-acetyl-D-muramoyl-L-alanyl-D-isoglutamine(out) + n H(+)(out) = N-acetyl-D-muramoyl-L-alanyl-D-isoglutamine(in) + n H(+)(in)</text>
        <dbReference type="Rhea" id="RHEA:76371"/>
        <dbReference type="ChEBI" id="CHEBI:15378"/>
        <dbReference type="ChEBI" id="CHEBI:155830"/>
    </reaction>
    <physiologicalReaction direction="left-to-right" evidence="8 10">
        <dbReference type="Rhea" id="RHEA:76372"/>
    </physiologicalReaction>
</comment>
<comment type="catalytic activity">
    <reaction evidence="5">
        <text>2',3'-cGAMP(out) + n H(+)(out) = 2',3'-cGAMP(in) + n H(+)(in)</text>
        <dbReference type="Rhea" id="RHEA:76411"/>
        <dbReference type="ChEBI" id="CHEBI:15378"/>
        <dbReference type="ChEBI" id="CHEBI:143093"/>
    </reaction>
    <physiologicalReaction direction="left-to-right" evidence="9">
        <dbReference type="Rhea" id="RHEA:76412"/>
    </physiologicalReaction>
</comment>
<comment type="subcellular location">
    <subcellularLocation>
        <location evidence="4">Lysosome membrane</location>
        <topology evidence="2">Multi-pass membrane protein</topology>
    </subcellularLocation>
</comment>
<comment type="tissue specificity">
    <text evidence="4">Expressed in liver, kidney, small intestine and colon.</text>
</comment>
<comment type="developmental stage">
    <text evidence="4">In liver, expression gradually increases up to 8 weeks of age.</text>
</comment>
<comment type="induction">
    <text evidence="4">In liver, expression is induced by the environmental contaminant 2,3,7,8-tetrachlorodibenzo-p-dioxin (TCDD); the induction is mediated by AHR.</text>
</comment>
<comment type="disruption phenotype">
    <text evidence="4">Knockout mice have liver copper levels increased by around 30%, with no differences in iron contents. Mutants are resistant to TCDD and high-fat diet-induced hepatic triglyceride accumlation and after 3 of high-fat diet feeding, body weight changes, liver mass and epididymal fat mass are reduced compared to wild-type mice.</text>
</comment>
<comment type="similarity">
    <text evidence="7">Belongs to the major facilitator superfamily. SLC46A family.</text>
</comment>
<proteinExistence type="evidence at transcript level"/>